<sequence>MPLTVNCPICKAPVEWVPQSAFKPFCSERCKLIDLGDWASEKHVIPVKAEFDPEAFDEFDLDEGDFFKE</sequence>
<keyword id="KW-0479">Metal-binding</keyword>
<keyword id="KW-0862">Zinc</keyword>
<gene>
    <name evidence="1" type="primary">yacG</name>
    <name type="ordered locus">Sbal195_4065</name>
</gene>
<feature type="chain" id="PRO_1000082727" description="DNA gyrase inhibitor YacG">
    <location>
        <begin position="1"/>
        <end position="69"/>
    </location>
</feature>
<feature type="binding site" evidence="1">
    <location>
        <position position="7"/>
    </location>
    <ligand>
        <name>Zn(2+)</name>
        <dbReference type="ChEBI" id="CHEBI:29105"/>
    </ligand>
</feature>
<feature type="binding site" evidence="1">
    <location>
        <position position="10"/>
    </location>
    <ligand>
        <name>Zn(2+)</name>
        <dbReference type="ChEBI" id="CHEBI:29105"/>
    </ligand>
</feature>
<feature type="binding site" evidence="1">
    <location>
        <position position="26"/>
    </location>
    <ligand>
        <name>Zn(2+)</name>
        <dbReference type="ChEBI" id="CHEBI:29105"/>
    </ligand>
</feature>
<feature type="binding site" evidence="1">
    <location>
        <position position="30"/>
    </location>
    <ligand>
        <name>Zn(2+)</name>
        <dbReference type="ChEBI" id="CHEBI:29105"/>
    </ligand>
</feature>
<accession>A9L5D1</accession>
<evidence type="ECO:0000255" key="1">
    <source>
        <dbReference type="HAMAP-Rule" id="MF_00649"/>
    </source>
</evidence>
<name>YACG_SHEB9</name>
<dbReference type="EMBL" id="CP000891">
    <property type="protein sequence ID" value="ABX51225.1"/>
    <property type="molecule type" value="Genomic_DNA"/>
</dbReference>
<dbReference type="RefSeq" id="WP_006083355.1">
    <property type="nucleotide sequence ID" value="NC_009997.1"/>
</dbReference>
<dbReference type="SMR" id="A9L5D1"/>
<dbReference type="GeneID" id="11774061"/>
<dbReference type="KEGG" id="sbn:Sbal195_4065"/>
<dbReference type="HOGENOM" id="CLU_178280_3_2_6"/>
<dbReference type="Proteomes" id="UP000000770">
    <property type="component" value="Chromosome"/>
</dbReference>
<dbReference type="GO" id="GO:0008657">
    <property type="term" value="F:DNA topoisomerase type II (double strand cut, ATP-hydrolyzing) inhibitor activity"/>
    <property type="evidence" value="ECO:0007669"/>
    <property type="project" value="UniProtKB-UniRule"/>
</dbReference>
<dbReference type="GO" id="GO:0008270">
    <property type="term" value="F:zinc ion binding"/>
    <property type="evidence" value="ECO:0007669"/>
    <property type="project" value="UniProtKB-UniRule"/>
</dbReference>
<dbReference type="GO" id="GO:0006355">
    <property type="term" value="P:regulation of DNA-templated transcription"/>
    <property type="evidence" value="ECO:0007669"/>
    <property type="project" value="InterPro"/>
</dbReference>
<dbReference type="Gene3D" id="3.30.50.10">
    <property type="entry name" value="Erythroid Transcription Factor GATA-1, subunit A"/>
    <property type="match status" value="1"/>
</dbReference>
<dbReference type="HAMAP" id="MF_00649">
    <property type="entry name" value="DNA_gyrase_inhibitor_YacG"/>
    <property type="match status" value="1"/>
</dbReference>
<dbReference type="InterPro" id="IPR005584">
    <property type="entry name" value="DNA_gyrase_inhibitor_YacG"/>
</dbReference>
<dbReference type="InterPro" id="IPR013088">
    <property type="entry name" value="Znf_NHR/GATA"/>
</dbReference>
<dbReference type="NCBIfam" id="NF001638">
    <property type="entry name" value="PRK00418.1"/>
    <property type="match status" value="1"/>
</dbReference>
<dbReference type="PANTHER" id="PTHR36150">
    <property type="entry name" value="DNA GYRASE INHIBITOR YACG"/>
    <property type="match status" value="1"/>
</dbReference>
<dbReference type="PANTHER" id="PTHR36150:SF1">
    <property type="entry name" value="DNA GYRASE INHIBITOR YACG"/>
    <property type="match status" value="1"/>
</dbReference>
<dbReference type="Pfam" id="PF03884">
    <property type="entry name" value="YacG"/>
    <property type="match status" value="1"/>
</dbReference>
<dbReference type="SUPFAM" id="SSF57716">
    <property type="entry name" value="Glucocorticoid receptor-like (DNA-binding domain)"/>
    <property type="match status" value="1"/>
</dbReference>
<comment type="function">
    <text evidence="1">Inhibits all the catalytic activities of DNA gyrase by preventing its interaction with DNA. Acts by binding directly to the C-terminal domain of GyrB, which probably disrupts DNA binding by the gyrase.</text>
</comment>
<comment type="cofactor">
    <cofactor evidence="1">
        <name>Zn(2+)</name>
        <dbReference type="ChEBI" id="CHEBI:29105"/>
    </cofactor>
    <text evidence="1">Binds 1 zinc ion.</text>
</comment>
<comment type="subunit">
    <text evidence="1">Interacts with GyrB.</text>
</comment>
<comment type="similarity">
    <text evidence="1">Belongs to the DNA gyrase inhibitor YacG family.</text>
</comment>
<proteinExistence type="inferred from homology"/>
<protein>
    <recommendedName>
        <fullName evidence="1">DNA gyrase inhibitor YacG</fullName>
    </recommendedName>
</protein>
<organism>
    <name type="scientific">Shewanella baltica (strain OS195)</name>
    <dbReference type="NCBI Taxonomy" id="399599"/>
    <lineage>
        <taxon>Bacteria</taxon>
        <taxon>Pseudomonadati</taxon>
        <taxon>Pseudomonadota</taxon>
        <taxon>Gammaproteobacteria</taxon>
        <taxon>Alteromonadales</taxon>
        <taxon>Shewanellaceae</taxon>
        <taxon>Shewanella</taxon>
    </lineage>
</organism>
<reference key="1">
    <citation type="submission" date="2007-11" db="EMBL/GenBank/DDBJ databases">
        <title>Complete sequence of chromosome of Shewanella baltica OS195.</title>
        <authorList>
            <consortium name="US DOE Joint Genome Institute"/>
            <person name="Copeland A."/>
            <person name="Lucas S."/>
            <person name="Lapidus A."/>
            <person name="Barry K."/>
            <person name="Glavina del Rio T."/>
            <person name="Dalin E."/>
            <person name="Tice H."/>
            <person name="Pitluck S."/>
            <person name="Chain P."/>
            <person name="Malfatti S."/>
            <person name="Shin M."/>
            <person name="Vergez L."/>
            <person name="Schmutz J."/>
            <person name="Larimer F."/>
            <person name="Land M."/>
            <person name="Hauser L."/>
            <person name="Kyrpides N."/>
            <person name="Kim E."/>
            <person name="Brettar I."/>
            <person name="Rodrigues J."/>
            <person name="Konstantinidis K."/>
            <person name="Klappenbach J."/>
            <person name="Hofle M."/>
            <person name="Tiedje J."/>
            <person name="Richardson P."/>
        </authorList>
    </citation>
    <scope>NUCLEOTIDE SEQUENCE [LARGE SCALE GENOMIC DNA]</scope>
    <source>
        <strain>OS195</strain>
    </source>
</reference>